<evidence type="ECO:0000255" key="1">
    <source>
        <dbReference type="HAMAP-Rule" id="MF_00605"/>
    </source>
</evidence>
<dbReference type="EC" id="2.1.1.228" evidence="1"/>
<dbReference type="EMBL" id="CP000266">
    <property type="protein sequence ID" value="ABF04940.1"/>
    <property type="molecule type" value="Genomic_DNA"/>
</dbReference>
<dbReference type="RefSeq" id="WP_000264779.1">
    <property type="nucleotide sequence ID" value="NC_008258.1"/>
</dbReference>
<dbReference type="SMR" id="Q0T175"/>
<dbReference type="KEGG" id="sfv:SFV_2863"/>
<dbReference type="HOGENOM" id="CLU_047363_0_1_6"/>
<dbReference type="Proteomes" id="UP000000659">
    <property type="component" value="Chromosome"/>
</dbReference>
<dbReference type="GO" id="GO:0005829">
    <property type="term" value="C:cytosol"/>
    <property type="evidence" value="ECO:0007669"/>
    <property type="project" value="TreeGrafter"/>
</dbReference>
<dbReference type="GO" id="GO:0052906">
    <property type="term" value="F:tRNA (guanine(37)-N1)-methyltransferase activity"/>
    <property type="evidence" value="ECO:0007669"/>
    <property type="project" value="UniProtKB-UniRule"/>
</dbReference>
<dbReference type="GO" id="GO:0002939">
    <property type="term" value="P:tRNA N1-guanine methylation"/>
    <property type="evidence" value="ECO:0007669"/>
    <property type="project" value="TreeGrafter"/>
</dbReference>
<dbReference type="CDD" id="cd18080">
    <property type="entry name" value="TrmD-like"/>
    <property type="match status" value="1"/>
</dbReference>
<dbReference type="FunFam" id="1.10.1270.20:FF:000001">
    <property type="entry name" value="tRNA (guanine-N(1)-)-methyltransferase"/>
    <property type="match status" value="1"/>
</dbReference>
<dbReference type="FunFam" id="3.40.1280.10:FF:000001">
    <property type="entry name" value="tRNA (guanine-N(1)-)-methyltransferase"/>
    <property type="match status" value="1"/>
</dbReference>
<dbReference type="Gene3D" id="3.40.1280.10">
    <property type="match status" value="1"/>
</dbReference>
<dbReference type="Gene3D" id="1.10.1270.20">
    <property type="entry name" value="tRNA(m1g37)methyltransferase, domain 2"/>
    <property type="match status" value="1"/>
</dbReference>
<dbReference type="HAMAP" id="MF_00605">
    <property type="entry name" value="TrmD"/>
    <property type="match status" value="1"/>
</dbReference>
<dbReference type="InterPro" id="IPR029028">
    <property type="entry name" value="Alpha/beta_knot_MTases"/>
</dbReference>
<dbReference type="InterPro" id="IPR023148">
    <property type="entry name" value="tRNA_m1G_MeTrfase_C_sf"/>
</dbReference>
<dbReference type="InterPro" id="IPR002649">
    <property type="entry name" value="tRNA_m1G_MeTrfase_TrmD"/>
</dbReference>
<dbReference type="InterPro" id="IPR029026">
    <property type="entry name" value="tRNA_m1G_MTases_N"/>
</dbReference>
<dbReference type="InterPro" id="IPR016009">
    <property type="entry name" value="tRNA_MeTrfase_TRMD/TRM10"/>
</dbReference>
<dbReference type="NCBIfam" id="NF000648">
    <property type="entry name" value="PRK00026.1"/>
    <property type="match status" value="1"/>
</dbReference>
<dbReference type="NCBIfam" id="TIGR00088">
    <property type="entry name" value="trmD"/>
    <property type="match status" value="1"/>
</dbReference>
<dbReference type="PANTHER" id="PTHR46417">
    <property type="entry name" value="TRNA (GUANINE-N(1)-)-METHYLTRANSFERASE"/>
    <property type="match status" value="1"/>
</dbReference>
<dbReference type="PANTHER" id="PTHR46417:SF1">
    <property type="entry name" value="TRNA (GUANINE-N(1)-)-METHYLTRANSFERASE"/>
    <property type="match status" value="1"/>
</dbReference>
<dbReference type="Pfam" id="PF01746">
    <property type="entry name" value="tRNA_m1G_MT"/>
    <property type="match status" value="1"/>
</dbReference>
<dbReference type="PIRSF" id="PIRSF000386">
    <property type="entry name" value="tRNA_mtase"/>
    <property type="match status" value="1"/>
</dbReference>
<dbReference type="SUPFAM" id="SSF75217">
    <property type="entry name" value="alpha/beta knot"/>
    <property type="match status" value="1"/>
</dbReference>
<comment type="function">
    <text evidence="1">Specifically methylates guanosine-37 in various tRNAs.</text>
</comment>
<comment type="catalytic activity">
    <reaction evidence="1">
        <text>guanosine(37) in tRNA + S-adenosyl-L-methionine = N(1)-methylguanosine(37) in tRNA + S-adenosyl-L-homocysteine + H(+)</text>
        <dbReference type="Rhea" id="RHEA:36899"/>
        <dbReference type="Rhea" id="RHEA-COMP:10145"/>
        <dbReference type="Rhea" id="RHEA-COMP:10147"/>
        <dbReference type="ChEBI" id="CHEBI:15378"/>
        <dbReference type="ChEBI" id="CHEBI:57856"/>
        <dbReference type="ChEBI" id="CHEBI:59789"/>
        <dbReference type="ChEBI" id="CHEBI:73542"/>
        <dbReference type="ChEBI" id="CHEBI:74269"/>
        <dbReference type="EC" id="2.1.1.228"/>
    </reaction>
</comment>
<comment type="subunit">
    <text evidence="1">Homodimer.</text>
</comment>
<comment type="subcellular location">
    <subcellularLocation>
        <location evidence="1">Cytoplasm</location>
    </subcellularLocation>
</comment>
<comment type="similarity">
    <text evidence="1">Belongs to the RNA methyltransferase TrmD family.</text>
</comment>
<gene>
    <name evidence="1" type="primary">trmD</name>
    <name type="ordered locus">SFV_2863</name>
</gene>
<reference key="1">
    <citation type="journal article" date="2006" name="BMC Genomics">
        <title>Complete genome sequence of Shigella flexneri 5b and comparison with Shigella flexneri 2a.</title>
        <authorList>
            <person name="Nie H."/>
            <person name="Yang F."/>
            <person name="Zhang X."/>
            <person name="Yang J."/>
            <person name="Chen L."/>
            <person name="Wang J."/>
            <person name="Xiong Z."/>
            <person name="Peng J."/>
            <person name="Sun L."/>
            <person name="Dong J."/>
            <person name="Xue Y."/>
            <person name="Xu X."/>
            <person name="Chen S."/>
            <person name="Yao Z."/>
            <person name="Shen Y."/>
            <person name="Jin Q."/>
        </authorList>
    </citation>
    <scope>NUCLEOTIDE SEQUENCE [LARGE SCALE GENOMIC DNA]</scope>
    <source>
        <strain>8401</strain>
    </source>
</reference>
<feature type="chain" id="PRO_1000006523" description="tRNA (guanine-N(1)-)-methyltransferase">
    <location>
        <begin position="1"/>
        <end position="255"/>
    </location>
</feature>
<feature type="binding site" evidence="1">
    <location>
        <position position="113"/>
    </location>
    <ligand>
        <name>S-adenosyl-L-methionine</name>
        <dbReference type="ChEBI" id="CHEBI:59789"/>
    </ligand>
</feature>
<feature type="binding site" evidence="1">
    <location>
        <begin position="133"/>
        <end position="138"/>
    </location>
    <ligand>
        <name>S-adenosyl-L-methionine</name>
        <dbReference type="ChEBI" id="CHEBI:59789"/>
    </ligand>
</feature>
<keyword id="KW-0963">Cytoplasm</keyword>
<keyword id="KW-0489">Methyltransferase</keyword>
<keyword id="KW-0949">S-adenosyl-L-methionine</keyword>
<keyword id="KW-0808">Transferase</keyword>
<keyword id="KW-0819">tRNA processing</keyword>
<sequence length="255" mass="28421">MWIGIISLFPEMFRAITDYGVTGRAVKNGLLSIQSWSPRDFTHDRHRTVDDRPYGGGPGMLMMVQPLRDAIHAAKAAAGEGAKVIYLSPQGRKLDQAGVSELATNQKLILVCGRYEGIDERVIQTEIDEEWSIGDYVLSGGELPAMTLIDSVSRFIPGVLGHEASATEDSFAEGLLDCPHYTRPEVLEGMEVPPVLLSGNHAEIRRWRLKQSLGRTWLRRPKLLENLALTEEQARLLAEFKTEHAQQQHKHDGMA</sequence>
<proteinExistence type="inferred from homology"/>
<name>TRMD_SHIF8</name>
<accession>Q0T175</accession>
<organism>
    <name type="scientific">Shigella flexneri serotype 5b (strain 8401)</name>
    <dbReference type="NCBI Taxonomy" id="373384"/>
    <lineage>
        <taxon>Bacteria</taxon>
        <taxon>Pseudomonadati</taxon>
        <taxon>Pseudomonadota</taxon>
        <taxon>Gammaproteobacteria</taxon>
        <taxon>Enterobacterales</taxon>
        <taxon>Enterobacteriaceae</taxon>
        <taxon>Shigella</taxon>
    </lineage>
</organism>
<protein>
    <recommendedName>
        <fullName evidence="1">tRNA (guanine-N(1)-)-methyltransferase</fullName>
        <ecNumber evidence="1">2.1.1.228</ecNumber>
    </recommendedName>
    <alternativeName>
        <fullName evidence="1">M1G-methyltransferase</fullName>
    </alternativeName>
    <alternativeName>
        <fullName evidence="1">tRNA [GM37] methyltransferase</fullName>
    </alternativeName>
</protein>